<keyword id="KW-0963">Cytoplasm</keyword>
<keyword id="KW-0378">Hydrolase</keyword>
<keyword id="KW-0645">Protease</keyword>
<keyword id="KW-0720">Serine protease</keyword>
<protein>
    <recommendedName>
        <fullName evidence="1">ATP-dependent Clp protease proteolytic subunit</fullName>
        <ecNumber evidence="1">3.4.21.92</ecNumber>
    </recommendedName>
    <alternativeName>
        <fullName evidence="1">Endopeptidase Clp</fullName>
    </alternativeName>
</protein>
<evidence type="ECO:0000255" key="1">
    <source>
        <dbReference type="HAMAP-Rule" id="MF_00444"/>
    </source>
</evidence>
<sequence>MSYIPVVIEQTSRGERAYDIYSRLLKERIIFVCSTVEDHMANLIVAQLLFLEAENPKKDIYMYINSPGGVVTAGLAIYDTMQFIKPKVATLCIGQACSMGSLLLCGGEHGMRYSLPHSRIMIHQPSGGYKGQATDIEIHARETLKIKKLLNELYSKHTEQALKHIEKSMERDNFMSPGEAKKFGLVDNIISSRDAMALLHK</sequence>
<gene>
    <name evidence="1" type="primary">clpP</name>
    <name type="ordered locus">RT0507</name>
</gene>
<dbReference type="EC" id="3.4.21.92" evidence="1"/>
<dbReference type="EMBL" id="AE017197">
    <property type="protein sequence ID" value="AAU03977.1"/>
    <property type="molecule type" value="Genomic_DNA"/>
</dbReference>
<dbReference type="RefSeq" id="WP_011190958.1">
    <property type="nucleotide sequence ID" value="NC_006142.1"/>
</dbReference>
<dbReference type="SMR" id="Q68WL5"/>
<dbReference type="MEROPS" id="S14.001"/>
<dbReference type="KEGG" id="rty:RT0507"/>
<dbReference type="eggNOG" id="COG0740">
    <property type="taxonomic scope" value="Bacteria"/>
</dbReference>
<dbReference type="HOGENOM" id="CLU_058707_3_3_5"/>
<dbReference type="OrthoDB" id="9802800at2"/>
<dbReference type="Proteomes" id="UP000000604">
    <property type="component" value="Chromosome"/>
</dbReference>
<dbReference type="GO" id="GO:0005737">
    <property type="term" value="C:cytoplasm"/>
    <property type="evidence" value="ECO:0007669"/>
    <property type="project" value="UniProtKB-SubCell"/>
</dbReference>
<dbReference type="GO" id="GO:0009368">
    <property type="term" value="C:endopeptidase Clp complex"/>
    <property type="evidence" value="ECO:0007669"/>
    <property type="project" value="TreeGrafter"/>
</dbReference>
<dbReference type="GO" id="GO:0004176">
    <property type="term" value="F:ATP-dependent peptidase activity"/>
    <property type="evidence" value="ECO:0007669"/>
    <property type="project" value="InterPro"/>
</dbReference>
<dbReference type="GO" id="GO:0051117">
    <property type="term" value="F:ATPase binding"/>
    <property type="evidence" value="ECO:0007669"/>
    <property type="project" value="TreeGrafter"/>
</dbReference>
<dbReference type="GO" id="GO:0004252">
    <property type="term" value="F:serine-type endopeptidase activity"/>
    <property type="evidence" value="ECO:0007669"/>
    <property type="project" value="UniProtKB-UniRule"/>
</dbReference>
<dbReference type="GO" id="GO:0006515">
    <property type="term" value="P:protein quality control for misfolded or incompletely synthesized proteins"/>
    <property type="evidence" value="ECO:0007669"/>
    <property type="project" value="TreeGrafter"/>
</dbReference>
<dbReference type="CDD" id="cd07017">
    <property type="entry name" value="S14_ClpP_2"/>
    <property type="match status" value="1"/>
</dbReference>
<dbReference type="FunFam" id="3.90.226.10:FF:000001">
    <property type="entry name" value="ATP-dependent Clp protease proteolytic subunit"/>
    <property type="match status" value="1"/>
</dbReference>
<dbReference type="Gene3D" id="3.90.226.10">
    <property type="entry name" value="2-enoyl-CoA Hydratase, Chain A, domain 1"/>
    <property type="match status" value="1"/>
</dbReference>
<dbReference type="HAMAP" id="MF_00444">
    <property type="entry name" value="ClpP"/>
    <property type="match status" value="1"/>
</dbReference>
<dbReference type="InterPro" id="IPR001907">
    <property type="entry name" value="ClpP"/>
</dbReference>
<dbReference type="InterPro" id="IPR029045">
    <property type="entry name" value="ClpP/crotonase-like_dom_sf"/>
</dbReference>
<dbReference type="InterPro" id="IPR023562">
    <property type="entry name" value="ClpP/TepA"/>
</dbReference>
<dbReference type="InterPro" id="IPR033135">
    <property type="entry name" value="ClpP_His_AS"/>
</dbReference>
<dbReference type="InterPro" id="IPR018215">
    <property type="entry name" value="ClpP_Ser_AS"/>
</dbReference>
<dbReference type="NCBIfam" id="TIGR00493">
    <property type="entry name" value="clpP"/>
    <property type="match status" value="1"/>
</dbReference>
<dbReference type="NCBIfam" id="NF001368">
    <property type="entry name" value="PRK00277.1"/>
    <property type="match status" value="1"/>
</dbReference>
<dbReference type="NCBIfam" id="NF009205">
    <property type="entry name" value="PRK12553.1"/>
    <property type="match status" value="1"/>
</dbReference>
<dbReference type="PANTHER" id="PTHR10381">
    <property type="entry name" value="ATP-DEPENDENT CLP PROTEASE PROTEOLYTIC SUBUNIT"/>
    <property type="match status" value="1"/>
</dbReference>
<dbReference type="PANTHER" id="PTHR10381:SF70">
    <property type="entry name" value="ATP-DEPENDENT CLP PROTEASE PROTEOLYTIC SUBUNIT"/>
    <property type="match status" value="1"/>
</dbReference>
<dbReference type="Pfam" id="PF00574">
    <property type="entry name" value="CLP_protease"/>
    <property type="match status" value="1"/>
</dbReference>
<dbReference type="PRINTS" id="PR00127">
    <property type="entry name" value="CLPPROTEASEP"/>
</dbReference>
<dbReference type="SUPFAM" id="SSF52096">
    <property type="entry name" value="ClpP/crotonase"/>
    <property type="match status" value="1"/>
</dbReference>
<dbReference type="PROSITE" id="PS00382">
    <property type="entry name" value="CLP_PROTEASE_HIS"/>
    <property type="match status" value="1"/>
</dbReference>
<dbReference type="PROSITE" id="PS00381">
    <property type="entry name" value="CLP_PROTEASE_SER"/>
    <property type="match status" value="1"/>
</dbReference>
<accession>Q68WL5</accession>
<comment type="function">
    <text evidence="1">Cleaves peptides in various proteins in a process that requires ATP hydrolysis. Has a chymotrypsin-like activity. Plays a major role in the degradation of misfolded proteins.</text>
</comment>
<comment type="catalytic activity">
    <reaction evidence="1">
        <text>Hydrolysis of proteins to small peptides in the presence of ATP and magnesium. alpha-casein is the usual test substrate. In the absence of ATP, only oligopeptides shorter than five residues are hydrolyzed (such as succinyl-Leu-Tyr-|-NHMec, and Leu-Tyr-Leu-|-Tyr-Trp, in which cleavage of the -Tyr-|-Leu- and -Tyr-|-Trp bonds also occurs).</text>
        <dbReference type="EC" id="3.4.21.92"/>
    </reaction>
</comment>
<comment type="subunit">
    <text evidence="1">Fourteen ClpP subunits assemble into 2 heptameric rings which stack back to back to give a disk-like structure with a central cavity, resembling the structure of eukaryotic proteasomes.</text>
</comment>
<comment type="subcellular location">
    <subcellularLocation>
        <location evidence="1">Cytoplasm</location>
    </subcellularLocation>
</comment>
<comment type="similarity">
    <text evidence="1">Belongs to the peptidase S14 family.</text>
</comment>
<organism>
    <name type="scientific">Rickettsia typhi (strain ATCC VR-144 / Wilmington)</name>
    <dbReference type="NCBI Taxonomy" id="257363"/>
    <lineage>
        <taxon>Bacteria</taxon>
        <taxon>Pseudomonadati</taxon>
        <taxon>Pseudomonadota</taxon>
        <taxon>Alphaproteobacteria</taxon>
        <taxon>Rickettsiales</taxon>
        <taxon>Rickettsiaceae</taxon>
        <taxon>Rickettsieae</taxon>
        <taxon>Rickettsia</taxon>
        <taxon>typhus group</taxon>
    </lineage>
</organism>
<name>CLPP_RICTY</name>
<reference key="1">
    <citation type="journal article" date="2004" name="J. Bacteriol.">
        <title>Complete genome sequence of Rickettsia typhi and comparison with sequences of other Rickettsiae.</title>
        <authorList>
            <person name="McLeod M.P."/>
            <person name="Qin X."/>
            <person name="Karpathy S.E."/>
            <person name="Gioia J."/>
            <person name="Highlander S.K."/>
            <person name="Fox G.E."/>
            <person name="McNeill T.Z."/>
            <person name="Jiang H."/>
            <person name="Muzny D."/>
            <person name="Jacob L.S."/>
            <person name="Hawes A.C."/>
            <person name="Sodergren E."/>
            <person name="Gill R."/>
            <person name="Hume J."/>
            <person name="Morgan M."/>
            <person name="Fan G."/>
            <person name="Amin A.G."/>
            <person name="Gibbs R.A."/>
            <person name="Hong C."/>
            <person name="Yu X.-J."/>
            <person name="Walker D.H."/>
            <person name="Weinstock G.M."/>
        </authorList>
    </citation>
    <scope>NUCLEOTIDE SEQUENCE [LARGE SCALE GENOMIC DNA]</scope>
    <source>
        <strain>ATCC VR-144 / Wilmington</strain>
    </source>
</reference>
<feature type="chain" id="PRO_0000179641" description="ATP-dependent Clp protease proteolytic subunit">
    <location>
        <begin position="1"/>
        <end position="201"/>
    </location>
</feature>
<feature type="active site" description="Nucleophile" evidence="1">
    <location>
        <position position="98"/>
    </location>
</feature>
<feature type="active site" evidence="1">
    <location>
        <position position="123"/>
    </location>
</feature>
<proteinExistence type="inferred from homology"/>